<reference key="1">
    <citation type="journal article" date="2000" name="Nature">
        <title>Sequence and analysis of chromosome 5 of the plant Arabidopsis thaliana.</title>
        <authorList>
            <person name="Tabata S."/>
            <person name="Kaneko T."/>
            <person name="Nakamura Y."/>
            <person name="Kotani H."/>
            <person name="Kato T."/>
            <person name="Asamizu E."/>
            <person name="Miyajima N."/>
            <person name="Sasamoto S."/>
            <person name="Kimura T."/>
            <person name="Hosouchi T."/>
            <person name="Kawashima K."/>
            <person name="Kohara M."/>
            <person name="Matsumoto M."/>
            <person name="Matsuno A."/>
            <person name="Muraki A."/>
            <person name="Nakayama S."/>
            <person name="Nakazaki N."/>
            <person name="Naruo K."/>
            <person name="Okumura S."/>
            <person name="Shinpo S."/>
            <person name="Takeuchi C."/>
            <person name="Wada T."/>
            <person name="Watanabe A."/>
            <person name="Yamada M."/>
            <person name="Yasuda M."/>
            <person name="Sato S."/>
            <person name="de la Bastide M."/>
            <person name="Huang E."/>
            <person name="Spiegel L."/>
            <person name="Gnoj L."/>
            <person name="O'Shaughnessy A."/>
            <person name="Preston R."/>
            <person name="Habermann K."/>
            <person name="Murray J."/>
            <person name="Johnson D."/>
            <person name="Rohlfing T."/>
            <person name="Nelson J."/>
            <person name="Stoneking T."/>
            <person name="Pepin K."/>
            <person name="Spieth J."/>
            <person name="Sekhon M."/>
            <person name="Armstrong J."/>
            <person name="Becker M."/>
            <person name="Belter E."/>
            <person name="Cordum H."/>
            <person name="Cordes M."/>
            <person name="Courtney L."/>
            <person name="Courtney W."/>
            <person name="Dante M."/>
            <person name="Du H."/>
            <person name="Edwards J."/>
            <person name="Fryman J."/>
            <person name="Haakensen B."/>
            <person name="Lamar E."/>
            <person name="Latreille P."/>
            <person name="Leonard S."/>
            <person name="Meyer R."/>
            <person name="Mulvaney E."/>
            <person name="Ozersky P."/>
            <person name="Riley A."/>
            <person name="Strowmatt C."/>
            <person name="Wagner-McPherson C."/>
            <person name="Wollam A."/>
            <person name="Yoakum M."/>
            <person name="Bell M."/>
            <person name="Dedhia N."/>
            <person name="Parnell L."/>
            <person name="Shah R."/>
            <person name="Rodriguez M."/>
            <person name="Hoon See L."/>
            <person name="Vil D."/>
            <person name="Baker J."/>
            <person name="Kirchoff K."/>
            <person name="Toth K."/>
            <person name="King L."/>
            <person name="Bahret A."/>
            <person name="Miller B."/>
            <person name="Marra M.A."/>
            <person name="Martienssen R."/>
            <person name="McCombie W.R."/>
            <person name="Wilson R.K."/>
            <person name="Murphy G."/>
            <person name="Bancroft I."/>
            <person name="Volckaert G."/>
            <person name="Wambutt R."/>
            <person name="Duesterhoeft A."/>
            <person name="Stiekema W."/>
            <person name="Pohl T."/>
            <person name="Entian K.-D."/>
            <person name="Terryn N."/>
            <person name="Hartley N."/>
            <person name="Bent E."/>
            <person name="Johnson S."/>
            <person name="Langham S.-A."/>
            <person name="McCullagh B."/>
            <person name="Robben J."/>
            <person name="Grymonprez B."/>
            <person name="Zimmermann W."/>
            <person name="Ramsperger U."/>
            <person name="Wedler H."/>
            <person name="Balke K."/>
            <person name="Wedler E."/>
            <person name="Peters S."/>
            <person name="van Staveren M."/>
            <person name="Dirkse W."/>
            <person name="Mooijman P."/>
            <person name="Klein Lankhorst R."/>
            <person name="Weitzenegger T."/>
            <person name="Bothe G."/>
            <person name="Rose M."/>
            <person name="Hauf J."/>
            <person name="Berneiser S."/>
            <person name="Hempel S."/>
            <person name="Feldpausch M."/>
            <person name="Lamberth S."/>
            <person name="Villarroel R."/>
            <person name="Gielen J."/>
            <person name="Ardiles W."/>
            <person name="Bents O."/>
            <person name="Lemcke K."/>
            <person name="Kolesov G."/>
            <person name="Mayer K.F.X."/>
            <person name="Rudd S."/>
            <person name="Schoof H."/>
            <person name="Schueller C."/>
            <person name="Zaccaria P."/>
            <person name="Mewes H.-W."/>
            <person name="Bevan M."/>
            <person name="Fransz P.F."/>
        </authorList>
    </citation>
    <scope>NUCLEOTIDE SEQUENCE [LARGE SCALE GENOMIC DNA]</scope>
    <source>
        <strain>cv. Columbia</strain>
    </source>
</reference>
<reference key="2">
    <citation type="journal article" date="2017" name="Plant J.">
        <title>Araport11: a complete reannotation of the Arabidopsis thaliana reference genome.</title>
        <authorList>
            <person name="Cheng C.Y."/>
            <person name="Krishnakumar V."/>
            <person name="Chan A.P."/>
            <person name="Thibaud-Nissen F."/>
            <person name="Schobel S."/>
            <person name="Town C.D."/>
        </authorList>
    </citation>
    <scope>GENOME REANNOTATION</scope>
    <source>
        <strain>cv. Columbia</strain>
    </source>
</reference>
<organism>
    <name type="scientific">Arabidopsis thaliana</name>
    <name type="common">Mouse-ear cress</name>
    <dbReference type="NCBI Taxonomy" id="3702"/>
    <lineage>
        <taxon>Eukaryota</taxon>
        <taxon>Viridiplantae</taxon>
        <taxon>Streptophyta</taxon>
        <taxon>Embryophyta</taxon>
        <taxon>Tracheophyta</taxon>
        <taxon>Spermatophyta</taxon>
        <taxon>Magnoliopsida</taxon>
        <taxon>eudicotyledons</taxon>
        <taxon>Gunneridae</taxon>
        <taxon>Pentapetalae</taxon>
        <taxon>rosids</taxon>
        <taxon>malvids</taxon>
        <taxon>Brassicales</taxon>
        <taxon>Brassicaceae</taxon>
        <taxon>Camelineae</taxon>
        <taxon>Arabidopsis</taxon>
    </lineage>
</organism>
<sequence length="1502" mass="167292">MENRGQKRMEVVEELPADKRACNSQDFRPSTSGSSVQAQANDTNPGHENVDADMDTSSSASPSSRSDEEEQEEQDKEDSDYGSCDSDEEDPRQRVLQDYQRQRSSGDHGKLKSLLLNLTGETDPSGQLSRLTELCEVLSFSTEESLSSVMANMLSPVLVKLAKHENNADIMLLAIRAITYLCDVYPPSVEFLVRHDTIPALCQRLLTIEYLDVAEQCLQALEKISRDEPVACLNAGAIMAVLSFIDFFSTSIQRVAISTVVNICKQLSSESPSPFMDAVPILCTLLQYEDRQLVENVAICLTKIADQASESPAMLDQLCRHGLINESTHLLNLNSRTTLSQPVYNGVIGMLRKLSSGSALAFRTLYELNIGYSLKEIMSTYDISHSVSSTHPINACSNQVHEVLKLVIELLPASPVEDNQLASEKESFLVNQPDLLQQFGRDMLPVMIQVLNSGANVYVSYGCLSAIHKLTCLSKSGDIVELLKNTNMSSVLAGILSRKDHHVIVVALQVAEVLLEKYRDTFLNSFIKEGVFFAIEALLSSDRGQQNQGSADLSQKPVTKEIVKCLCQSFERSLSSSSQTCKIEKDSVYVLATRIKEGFFGPEVFNSEKGLTDVLQNLKNLSVALSELMTVPIDAHVLHDEKFFSIWNQIMERLNGRESVSTFEFIESGVVKSLASYLSNGLYQRKLSKGGPECDSLPFIGKRFEVFTRLLWSDGEATSSLLIQKLQNSLSSLENFPIVLSQFLKQKNSFAAIPNGRCTSYPCLKVRFLKAEGETSLRDYSQDFVTVDPLCYLDAVDQYLWPKVNIEPIDSVEAKDQAIECQSSQLQSTSISCQAESSSPMEIDSESSDASQLQGSQVEDQTQLPGQQNASSSETSSEKEDAVPRLLFRLEGLELDRSLTVYQAILLHKLKSESEATNDSKLSGPHNITYERSAQLGDSRENLFPPGSMEDDEYRPFLSYLFTHRLALRLKGSSHPPYDILFLLKSLEGMNRFLFHLISLERINAFGEGRLENLDDLRVQVRPVPHSEFVSSKLTEKLEQQLRDSFAVSTCGLPPWFNDLMDSCPCLFSFEAKSKYFRLAAFGSQKIRHHPQHLSSSNVHGEARPVTGSLPRKKFLACRENILESAAKMMELYGNQKVVIEVEYSEEVGTGLGPTLEFYTLVSRAFQNPDLGMWRNDCSFIVGKPVEHSGVLASSSGLFPRPWSGTSTTSDVLQKFVLLGTVVAKALQDGRVLDLPLSKAFYKLILGQELSSFDIHFVDPELCKTLVELQALVRRKKLFAEAHGDSGAAKCDLSFHGTKIEDLCLEFALPGYTDYDLAPYSANDMVNLDNLEEYIKGIVNATVCNGIQKQVEAFRSGFNQVFSIEHLRIFNEEELETMLCGECDLFSMNEVLDHIKFDHGYTSSSPPVEYLLQILHEFDREQQRAFLQFVTGSPRLPHGGLASLSPKLTIVRKHGSDSSDTDLPSVMTCANYLKLPPYSSKEKMKEKLIYAITEGQGSFHLS</sequence>
<protein>
    <recommendedName>
        <fullName>E3 ubiquitin-protein ligase UPL4</fullName>
        <shortName>Ubiquitin-protein ligase 4</shortName>
        <ecNumber>2.3.2.26</ecNumber>
    </recommendedName>
    <alternativeName>
        <fullName>HECT-type E3 ubiquitin transferase UPL4</fullName>
    </alternativeName>
</protein>
<feature type="chain" id="PRO_0000312022" description="E3 ubiquitin-protein ligase UPL4">
    <location>
        <begin position="1"/>
        <end position="1502"/>
    </location>
</feature>
<feature type="repeat" description="ARM 1">
    <location>
        <begin position="143"/>
        <end position="183"/>
    </location>
</feature>
<feature type="repeat" description="ARM 2">
    <location>
        <begin position="186"/>
        <end position="226"/>
    </location>
</feature>
<feature type="repeat" description="ARM 3">
    <location>
        <begin position="228"/>
        <end position="265"/>
    </location>
</feature>
<feature type="repeat" description="ARM 4">
    <location>
        <begin position="267"/>
        <end position="306"/>
    </location>
</feature>
<feature type="domain" description="HECT" evidence="2">
    <location>
        <begin position="1128"/>
        <end position="1502"/>
    </location>
</feature>
<feature type="region of interest" description="Disordered" evidence="3">
    <location>
        <begin position="1"/>
        <end position="107"/>
    </location>
</feature>
<feature type="region of interest" description="Disordered" evidence="3">
    <location>
        <begin position="833"/>
        <end position="881"/>
    </location>
</feature>
<feature type="region of interest" description="K-box">
    <location>
        <begin position="1022"/>
        <end position="1096"/>
    </location>
</feature>
<feature type="compositionally biased region" description="Basic and acidic residues" evidence="3">
    <location>
        <begin position="1"/>
        <end position="21"/>
    </location>
</feature>
<feature type="compositionally biased region" description="Polar residues" evidence="3">
    <location>
        <begin position="22"/>
        <end position="46"/>
    </location>
</feature>
<feature type="compositionally biased region" description="Acidic residues" evidence="3">
    <location>
        <begin position="67"/>
        <end position="90"/>
    </location>
</feature>
<feature type="compositionally biased region" description="Basic and acidic residues" evidence="3">
    <location>
        <begin position="91"/>
        <end position="107"/>
    </location>
</feature>
<feature type="compositionally biased region" description="Polar residues" evidence="3">
    <location>
        <begin position="849"/>
        <end position="875"/>
    </location>
</feature>
<feature type="active site" description="Glycyl thioester intermediate" evidence="2">
    <location>
        <position position="1469"/>
    </location>
</feature>
<dbReference type="EC" id="2.3.2.26"/>
<dbReference type="EMBL" id="AL162973">
    <property type="protein sequence ID" value="CAB86042.1"/>
    <property type="molecule type" value="Genomic_DNA"/>
</dbReference>
<dbReference type="EMBL" id="CP002688">
    <property type="protein sequence ID" value="AED90531.1"/>
    <property type="molecule type" value="Genomic_DNA"/>
</dbReference>
<dbReference type="PIR" id="T48309">
    <property type="entry name" value="T48309"/>
</dbReference>
<dbReference type="RefSeq" id="NP_195908.1">
    <property type="nucleotide sequence ID" value="NM_120366.4"/>
</dbReference>
<dbReference type="SMR" id="Q9LYZ7"/>
<dbReference type="FunCoup" id="Q9LYZ7">
    <property type="interactions" value="4032"/>
</dbReference>
<dbReference type="STRING" id="3702.Q9LYZ7"/>
<dbReference type="iPTMnet" id="Q9LYZ7"/>
<dbReference type="PaxDb" id="3702-AT5G02880.1"/>
<dbReference type="ProteomicsDB" id="233004"/>
<dbReference type="EnsemblPlants" id="AT5G02880.1">
    <property type="protein sequence ID" value="AT5G02880.1"/>
    <property type="gene ID" value="AT5G02880"/>
</dbReference>
<dbReference type="GeneID" id="831758"/>
<dbReference type="Gramene" id="AT5G02880.1">
    <property type="protein sequence ID" value="AT5G02880.1"/>
    <property type="gene ID" value="AT5G02880"/>
</dbReference>
<dbReference type="KEGG" id="ath:AT5G02880"/>
<dbReference type="Araport" id="AT5G02880"/>
<dbReference type="TAIR" id="AT5G02880">
    <property type="gene designation" value="UPL4"/>
</dbReference>
<dbReference type="eggNOG" id="KOG0168">
    <property type="taxonomic scope" value="Eukaryota"/>
</dbReference>
<dbReference type="eggNOG" id="KOG0170">
    <property type="taxonomic scope" value="Eukaryota"/>
</dbReference>
<dbReference type="HOGENOM" id="CLU_000366_1_0_1"/>
<dbReference type="InParanoid" id="Q9LYZ7"/>
<dbReference type="OMA" id="FFTIHAQ"/>
<dbReference type="PhylomeDB" id="Q9LYZ7"/>
<dbReference type="UniPathway" id="UPA00143"/>
<dbReference type="PRO" id="PR:Q9LYZ7"/>
<dbReference type="Proteomes" id="UP000006548">
    <property type="component" value="Chromosome 5"/>
</dbReference>
<dbReference type="ExpressionAtlas" id="Q9LYZ7">
    <property type="expression patterns" value="baseline and differential"/>
</dbReference>
<dbReference type="GO" id="GO:0061630">
    <property type="term" value="F:ubiquitin protein ligase activity"/>
    <property type="evidence" value="ECO:0007669"/>
    <property type="project" value="InterPro"/>
</dbReference>
<dbReference type="GO" id="GO:0016567">
    <property type="term" value="P:protein ubiquitination"/>
    <property type="evidence" value="ECO:0007669"/>
    <property type="project" value="UniProtKB-UniPathway"/>
</dbReference>
<dbReference type="GO" id="GO:0006511">
    <property type="term" value="P:ubiquitin-dependent protein catabolic process"/>
    <property type="evidence" value="ECO:0007669"/>
    <property type="project" value="InterPro"/>
</dbReference>
<dbReference type="CDD" id="cd00078">
    <property type="entry name" value="HECTc"/>
    <property type="match status" value="1"/>
</dbReference>
<dbReference type="FunFam" id="3.30.2410.10:FF:000007">
    <property type="entry name" value="Putative E3 ubiquitin-protein ligase HECTD1"/>
    <property type="match status" value="1"/>
</dbReference>
<dbReference type="Gene3D" id="3.30.2410.10">
    <property type="entry name" value="Hect, E3 ligase catalytic domain"/>
    <property type="match status" value="1"/>
</dbReference>
<dbReference type="Gene3D" id="3.90.1750.10">
    <property type="entry name" value="Hect, E3 ligase catalytic domains"/>
    <property type="match status" value="1"/>
</dbReference>
<dbReference type="Gene3D" id="1.25.10.10">
    <property type="entry name" value="Leucine-rich Repeat Variant"/>
    <property type="match status" value="1"/>
</dbReference>
<dbReference type="InterPro" id="IPR011989">
    <property type="entry name" value="ARM-like"/>
</dbReference>
<dbReference type="InterPro" id="IPR016024">
    <property type="entry name" value="ARM-type_fold"/>
</dbReference>
<dbReference type="InterPro" id="IPR000569">
    <property type="entry name" value="HECT_dom"/>
</dbReference>
<dbReference type="InterPro" id="IPR035983">
    <property type="entry name" value="Hect_E3_ubiquitin_ligase"/>
</dbReference>
<dbReference type="InterPro" id="IPR045322">
    <property type="entry name" value="HECTD1/TRIP12-like"/>
</dbReference>
<dbReference type="PANTHER" id="PTHR45670">
    <property type="entry name" value="E3 UBIQUITIN-PROTEIN LIGASE TRIP12"/>
    <property type="match status" value="1"/>
</dbReference>
<dbReference type="PANTHER" id="PTHR45670:SF10">
    <property type="entry name" value="E3 UBIQUITIN-PROTEIN LIGASE UPL4"/>
    <property type="match status" value="1"/>
</dbReference>
<dbReference type="Pfam" id="PF00632">
    <property type="entry name" value="HECT"/>
    <property type="match status" value="1"/>
</dbReference>
<dbReference type="SMART" id="SM00119">
    <property type="entry name" value="HECTc"/>
    <property type="match status" value="1"/>
</dbReference>
<dbReference type="SUPFAM" id="SSF48371">
    <property type="entry name" value="ARM repeat"/>
    <property type="match status" value="1"/>
</dbReference>
<dbReference type="SUPFAM" id="SSF56204">
    <property type="entry name" value="Hect, E3 ligase catalytic domain"/>
    <property type="match status" value="1"/>
</dbReference>
<dbReference type="PROSITE" id="PS50237">
    <property type="entry name" value="HECT"/>
    <property type="match status" value="1"/>
</dbReference>
<proteinExistence type="inferred from homology"/>
<name>UPL4_ARATH</name>
<comment type="function">
    <text evidence="1">Probable E3 ubiquitin-protein ligase which mediates ubiquitination and subsequent proteasomal degradation of target proteins.</text>
</comment>
<comment type="catalytic activity">
    <reaction>
        <text>S-ubiquitinyl-[E2 ubiquitin-conjugating enzyme]-L-cysteine + [acceptor protein]-L-lysine = [E2 ubiquitin-conjugating enzyme]-L-cysteine + N(6)-ubiquitinyl-[acceptor protein]-L-lysine.</text>
        <dbReference type="EC" id="2.3.2.26"/>
    </reaction>
</comment>
<comment type="pathway">
    <text>Protein modification; protein ubiquitination.</text>
</comment>
<comment type="similarity">
    <text evidence="4">Belongs to the UPL family. K-HECT subfamily.</text>
</comment>
<keyword id="KW-1185">Reference proteome</keyword>
<keyword id="KW-0677">Repeat</keyword>
<keyword id="KW-0808">Transferase</keyword>
<keyword id="KW-0833">Ubl conjugation pathway</keyword>
<evidence type="ECO:0000250" key="1"/>
<evidence type="ECO:0000255" key="2">
    <source>
        <dbReference type="PROSITE-ProRule" id="PRU00104"/>
    </source>
</evidence>
<evidence type="ECO:0000256" key="3">
    <source>
        <dbReference type="SAM" id="MobiDB-lite"/>
    </source>
</evidence>
<evidence type="ECO:0000305" key="4"/>
<accession>Q9LYZ7</accession>
<gene>
    <name type="primary">UPL4</name>
    <name type="synonym">KLI5</name>
    <name type="ordered locus">At5g02880</name>
    <name type="ORF">F9G14_190</name>
</gene>